<organism>
    <name type="scientific">Legionella pneumophila subsp. pneumophila (strain Philadelphia 1 / ATCC 33152 / DSM 7513)</name>
    <dbReference type="NCBI Taxonomy" id="272624"/>
    <lineage>
        <taxon>Bacteria</taxon>
        <taxon>Pseudomonadati</taxon>
        <taxon>Pseudomonadota</taxon>
        <taxon>Gammaproteobacteria</taxon>
        <taxon>Legionellales</taxon>
        <taxon>Legionellaceae</taxon>
        <taxon>Legionella</taxon>
    </lineage>
</organism>
<evidence type="ECO:0000255" key="1">
    <source>
        <dbReference type="HAMAP-Rule" id="MF_01398"/>
    </source>
</evidence>
<keyword id="KW-0066">ATP synthesis</keyword>
<keyword id="KW-0997">Cell inner membrane</keyword>
<keyword id="KW-1003">Cell membrane</keyword>
<keyword id="KW-0138">CF(0)</keyword>
<keyword id="KW-0375">Hydrogen ion transport</keyword>
<keyword id="KW-0406">Ion transport</keyword>
<keyword id="KW-0472">Membrane</keyword>
<keyword id="KW-1185">Reference proteome</keyword>
<keyword id="KW-0812">Transmembrane</keyword>
<keyword id="KW-1133">Transmembrane helix</keyword>
<keyword id="KW-0813">Transport</keyword>
<protein>
    <recommendedName>
        <fullName evidence="1">ATP synthase subunit b</fullName>
    </recommendedName>
    <alternativeName>
        <fullName evidence="1">ATP synthase F(0) sector subunit b</fullName>
    </alternativeName>
    <alternativeName>
        <fullName evidence="1">ATPase subunit I</fullName>
    </alternativeName>
    <alternativeName>
        <fullName evidence="1">F-type ATPase subunit b</fullName>
        <shortName evidence="1">F-ATPase subunit b</shortName>
    </alternativeName>
</protein>
<gene>
    <name evidence="1" type="primary">atpF</name>
    <name type="ordered locus">lpg2986</name>
</gene>
<comment type="function">
    <text evidence="1">F(1)F(0) ATP synthase produces ATP from ADP in the presence of a proton or sodium gradient. F-type ATPases consist of two structural domains, F(1) containing the extramembraneous catalytic core and F(0) containing the membrane proton channel, linked together by a central stalk and a peripheral stalk. During catalysis, ATP synthesis in the catalytic domain of F(1) is coupled via a rotary mechanism of the central stalk subunits to proton translocation.</text>
</comment>
<comment type="function">
    <text evidence="1">Component of the F(0) channel, it forms part of the peripheral stalk, linking F(1) to F(0).</text>
</comment>
<comment type="subunit">
    <text evidence="1">F-type ATPases have 2 components, F(1) - the catalytic core - and F(0) - the membrane proton channel. F(1) has five subunits: alpha(3), beta(3), gamma(1), delta(1), epsilon(1). F(0) has three main subunits: a(1), b(2) and c(10-14). The alpha and beta chains form an alternating ring which encloses part of the gamma chain. F(1) is attached to F(0) by a central stalk formed by the gamma and epsilon chains, while a peripheral stalk is formed by the delta and b chains.</text>
</comment>
<comment type="subcellular location">
    <subcellularLocation>
        <location evidence="1">Cell inner membrane</location>
        <topology evidence="1">Single-pass membrane protein</topology>
    </subcellularLocation>
</comment>
<comment type="similarity">
    <text evidence="1">Belongs to the ATPase B chain family.</text>
</comment>
<feature type="chain" id="PRO_0000368556" description="ATP synthase subunit b">
    <location>
        <begin position="1"/>
        <end position="156"/>
    </location>
</feature>
<feature type="transmembrane region" description="Helical" evidence="1">
    <location>
        <begin position="5"/>
        <end position="25"/>
    </location>
</feature>
<name>ATPF_LEGPH</name>
<proteinExistence type="inferred from homology"/>
<reference key="1">
    <citation type="journal article" date="2004" name="Science">
        <title>The genomic sequence of the accidental pathogen Legionella pneumophila.</title>
        <authorList>
            <person name="Chien M."/>
            <person name="Morozova I."/>
            <person name="Shi S."/>
            <person name="Sheng H."/>
            <person name="Chen J."/>
            <person name="Gomez S.M."/>
            <person name="Asamani G."/>
            <person name="Hill K."/>
            <person name="Nuara J."/>
            <person name="Feder M."/>
            <person name="Rineer J."/>
            <person name="Greenberg J.J."/>
            <person name="Steshenko V."/>
            <person name="Park S.H."/>
            <person name="Zhao B."/>
            <person name="Teplitskaya E."/>
            <person name="Edwards J.R."/>
            <person name="Pampou S."/>
            <person name="Georghiou A."/>
            <person name="Chou I.-C."/>
            <person name="Iannuccilli W."/>
            <person name="Ulz M.E."/>
            <person name="Kim D.H."/>
            <person name="Geringer-Sameth A."/>
            <person name="Goldsberry C."/>
            <person name="Morozov P."/>
            <person name="Fischer S.G."/>
            <person name="Segal G."/>
            <person name="Qu X."/>
            <person name="Rzhetsky A."/>
            <person name="Zhang P."/>
            <person name="Cayanis E."/>
            <person name="De Jong P.J."/>
            <person name="Ju J."/>
            <person name="Kalachikov S."/>
            <person name="Shuman H.A."/>
            <person name="Russo J.J."/>
        </authorList>
    </citation>
    <scope>NUCLEOTIDE SEQUENCE [LARGE SCALE GENOMIC DNA]</scope>
    <source>
        <strain>Philadelphia 1 / ATCC 33152 / DSM 7513</strain>
    </source>
</reference>
<accession>Q5ZR97</accession>
<dbReference type="EMBL" id="AE017354">
    <property type="protein sequence ID" value="AAU29031.1"/>
    <property type="molecule type" value="Genomic_DNA"/>
</dbReference>
<dbReference type="RefSeq" id="WP_010948670.1">
    <property type="nucleotide sequence ID" value="NC_002942.5"/>
</dbReference>
<dbReference type="RefSeq" id="YP_096978.1">
    <property type="nucleotide sequence ID" value="NC_002942.5"/>
</dbReference>
<dbReference type="SMR" id="Q5ZR97"/>
<dbReference type="STRING" id="272624.lpg2986"/>
<dbReference type="PaxDb" id="272624-lpg2986"/>
<dbReference type="KEGG" id="lpn:lpg2986"/>
<dbReference type="PATRIC" id="fig|272624.6.peg.3192"/>
<dbReference type="eggNOG" id="COG0711">
    <property type="taxonomic scope" value="Bacteria"/>
</dbReference>
<dbReference type="HOGENOM" id="CLU_079215_4_5_6"/>
<dbReference type="OrthoDB" id="9788020at2"/>
<dbReference type="Proteomes" id="UP000000609">
    <property type="component" value="Chromosome"/>
</dbReference>
<dbReference type="GO" id="GO:0005886">
    <property type="term" value="C:plasma membrane"/>
    <property type="evidence" value="ECO:0007669"/>
    <property type="project" value="UniProtKB-SubCell"/>
</dbReference>
<dbReference type="GO" id="GO:0045259">
    <property type="term" value="C:proton-transporting ATP synthase complex"/>
    <property type="evidence" value="ECO:0007669"/>
    <property type="project" value="UniProtKB-KW"/>
</dbReference>
<dbReference type="GO" id="GO:0046933">
    <property type="term" value="F:proton-transporting ATP synthase activity, rotational mechanism"/>
    <property type="evidence" value="ECO:0007669"/>
    <property type="project" value="UniProtKB-UniRule"/>
</dbReference>
<dbReference type="GO" id="GO:0046961">
    <property type="term" value="F:proton-transporting ATPase activity, rotational mechanism"/>
    <property type="evidence" value="ECO:0007669"/>
    <property type="project" value="TreeGrafter"/>
</dbReference>
<dbReference type="CDD" id="cd06503">
    <property type="entry name" value="ATP-synt_Fo_b"/>
    <property type="match status" value="1"/>
</dbReference>
<dbReference type="Gene3D" id="6.10.250.1580">
    <property type="match status" value="1"/>
</dbReference>
<dbReference type="HAMAP" id="MF_01398">
    <property type="entry name" value="ATP_synth_b_bprime"/>
    <property type="match status" value="1"/>
</dbReference>
<dbReference type="InterPro" id="IPR028987">
    <property type="entry name" value="ATP_synth_B-like_membr_sf"/>
</dbReference>
<dbReference type="InterPro" id="IPR002146">
    <property type="entry name" value="ATP_synth_b/b'su_bac/chlpt"/>
</dbReference>
<dbReference type="InterPro" id="IPR005864">
    <property type="entry name" value="ATP_synth_F0_bsu_bac"/>
</dbReference>
<dbReference type="InterPro" id="IPR050059">
    <property type="entry name" value="ATP_synthase_B_chain"/>
</dbReference>
<dbReference type="NCBIfam" id="TIGR01144">
    <property type="entry name" value="ATP_synt_b"/>
    <property type="match status" value="1"/>
</dbReference>
<dbReference type="NCBIfam" id="NF004411">
    <property type="entry name" value="PRK05759.1-2"/>
    <property type="match status" value="1"/>
</dbReference>
<dbReference type="PANTHER" id="PTHR33445:SF1">
    <property type="entry name" value="ATP SYNTHASE SUBUNIT B"/>
    <property type="match status" value="1"/>
</dbReference>
<dbReference type="PANTHER" id="PTHR33445">
    <property type="entry name" value="ATP SYNTHASE SUBUNIT B', CHLOROPLASTIC"/>
    <property type="match status" value="1"/>
</dbReference>
<dbReference type="Pfam" id="PF00430">
    <property type="entry name" value="ATP-synt_B"/>
    <property type="match status" value="1"/>
</dbReference>
<dbReference type="SUPFAM" id="SSF81573">
    <property type="entry name" value="F1F0 ATP synthase subunit B, membrane domain"/>
    <property type="match status" value="1"/>
</dbReference>
<sequence>MDINLTLIVQMLVFAAFVLFTMKLVWPPLAKALEERQDKIADGLAAAERGRKELELAQHRVKDELKQAKAHSADIIDKANKRASEIIEAAKEAAKREAQIQAKLAQEQIAQQVNHAKEELRKQVAKLAITGAEKILMREVDAKANSELLDNLIEEI</sequence>